<name>EFTU_GLOMP</name>
<organism>
    <name type="scientific">Gloeothece membranacea (strain PCC 6501 / SAG 26.84)</name>
    <dbReference type="NCBI Taxonomy" id="55396"/>
    <lineage>
        <taxon>Bacteria</taxon>
        <taxon>Bacillati</taxon>
        <taxon>Cyanobacteriota</taxon>
        <taxon>Cyanophyceae</taxon>
        <taxon>Oscillatoriophycideae</taxon>
        <taxon>Chroococcales</taxon>
        <taxon>Aphanothecaceae</taxon>
        <taxon>Gloeothece</taxon>
    </lineage>
</organism>
<comment type="function">
    <text evidence="2">GTP hydrolase that promotes the GTP-dependent binding of aminoacyl-tRNA to the A-site of ribosomes during protein biosynthesis.</text>
</comment>
<comment type="catalytic activity">
    <reaction evidence="2">
        <text>GTP + H2O = GDP + phosphate + H(+)</text>
        <dbReference type="Rhea" id="RHEA:19669"/>
        <dbReference type="ChEBI" id="CHEBI:15377"/>
        <dbReference type="ChEBI" id="CHEBI:15378"/>
        <dbReference type="ChEBI" id="CHEBI:37565"/>
        <dbReference type="ChEBI" id="CHEBI:43474"/>
        <dbReference type="ChEBI" id="CHEBI:58189"/>
        <dbReference type="EC" id="3.6.5.3"/>
    </reaction>
    <physiologicalReaction direction="left-to-right" evidence="2">
        <dbReference type="Rhea" id="RHEA:19670"/>
    </physiologicalReaction>
</comment>
<comment type="subunit">
    <text evidence="1">Monomer.</text>
</comment>
<comment type="subcellular location">
    <subcellularLocation>
        <location evidence="1">Cytoplasm</location>
    </subcellularLocation>
</comment>
<comment type="similarity">
    <text evidence="3">Belongs to the TRAFAC class translation factor GTPase superfamily. Classic translation factor GTPase family. EF-Tu/EF-1A subfamily.</text>
</comment>
<proteinExistence type="inferred from homology"/>
<protein>
    <recommendedName>
        <fullName>Elongation factor Tu</fullName>
        <shortName>EF-Tu</shortName>
        <ecNumber evidence="2">3.6.5.3</ecNumber>
    </recommendedName>
</protein>
<feature type="chain" id="PRO_0000091329" description="Elongation factor Tu">
    <location>
        <begin position="1" status="less than"/>
        <end position="235" status="greater than"/>
    </location>
</feature>
<feature type="domain" description="tr-type G" evidence="3">
    <location>
        <begin position="1" status="less than"/>
        <end position="125"/>
    </location>
</feature>
<feature type="binding site" evidence="1">
    <location>
        <begin position="47"/>
        <end position="50"/>
    </location>
    <ligand>
        <name>GTP</name>
        <dbReference type="ChEBI" id="CHEBI:37565"/>
    </ligand>
</feature>
<feature type="non-terminal residue">
    <location>
        <position position="1"/>
    </location>
</feature>
<feature type="non-terminal residue">
    <location>
        <position position="235"/>
    </location>
</feature>
<dbReference type="EC" id="3.6.5.3" evidence="2"/>
<dbReference type="EMBL" id="U09434">
    <property type="protein sequence ID" value="AAC18636.1"/>
    <property type="molecule type" value="Genomic_DNA"/>
</dbReference>
<dbReference type="SMR" id="P50063"/>
<dbReference type="GO" id="GO:0005829">
    <property type="term" value="C:cytosol"/>
    <property type="evidence" value="ECO:0007669"/>
    <property type="project" value="TreeGrafter"/>
</dbReference>
<dbReference type="GO" id="GO:0005525">
    <property type="term" value="F:GTP binding"/>
    <property type="evidence" value="ECO:0007669"/>
    <property type="project" value="UniProtKB-KW"/>
</dbReference>
<dbReference type="GO" id="GO:0003924">
    <property type="term" value="F:GTPase activity"/>
    <property type="evidence" value="ECO:0007669"/>
    <property type="project" value="InterPro"/>
</dbReference>
<dbReference type="GO" id="GO:0003746">
    <property type="term" value="F:translation elongation factor activity"/>
    <property type="evidence" value="ECO:0007669"/>
    <property type="project" value="UniProtKB-KW"/>
</dbReference>
<dbReference type="CDD" id="cd03697">
    <property type="entry name" value="EFTU_II"/>
    <property type="match status" value="1"/>
</dbReference>
<dbReference type="FunFam" id="2.40.30.10:FF:000001">
    <property type="entry name" value="Elongation factor Tu"/>
    <property type="match status" value="1"/>
</dbReference>
<dbReference type="Gene3D" id="3.40.50.300">
    <property type="entry name" value="P-loop containing nucleotide triphosphate hydrolases"/>
    <property type="match status" value="1"/>
</dbReference>
<dbReference type="Gene3D" id="2.40.30.10">
    <property type="entry name" value="Translation factors"/>
    <property type="match status" value="1"/>
</dbReference>
<dbReference type="InterPro" id="IPR050055">
    <property type="entry name" value="EF-Tu_GTPase"/>
</dbReference>
<dbReference type="InterPro" id="IPR004161">
    <property type="entry name" value="EFTu-like_2"/>
</dbReference>
<dbReference type="InterPro" id="IPR033720">
    <property type="entry name" value="EFTU_2"/>
</dbReference>
<dbReference type="InterPro" id="IPR027417">
    <property type="entry name" value="P-loop_NTPase"/>
</dbReference>
<dbReference type="InterPro" id="IPR000795">
    <property type="entry name" value="T_Tr_GTP-bd_dom"/>
</dbReference>
<dbReference type="InterPro" id="IPR009000">
    <property type="entry name" value="Transl_B-barrel_sf"/>
</dbReference>
<dbReference type="PANTHER" id="PTHR43721:SF22">
    <property type="entry name" value="ELONGATION FACTOR TU, MITOCHONDRIAL"/>
    <property type="match status" value="1"/>
</dbReference>
<dbReference type="PANTHER" id="PTHR43721">
    <property type="entry name" value="ELONGATION FACTOR TU-RELATED"/>
    <property type="match status" value="1"/>
</dbReference>
<dbReference type="Pfam" id="PF00009">
    <property type="entry name" value="GTP_EFTU"/>
    <property type="match status" value="1"/>
</dbReference>
<dbReference type="Pfam" id="PF03144">
    <property type="entry name" value="GTP_EFTU_D2"/>
    <property type="match status" value="1"/>
</dbReference>
<dbReference type="PRINTS" id="PR00315">
    <property type="entry name" value="ELONGATNFCT"/>
</dbReference>
<dbReference type="SUPFAM" id="SSF52540">
    <property type="entry name" value="P-loop containing nucleoside triphosphate hydrolases"/>
    <property type="match status" value="1"/>
</dbReference>
<dbReference type="SUPFAM" id="SSF50447">
    <property type="entry name" value="Translation proteins"/>
    <property type="match status" value="1"/>
</dbReference>
<dbReference type="PROSITE" id="PS51722">
    <property type="entry name" value="G_TR_2"/>
    <property type="match status" value="1"/>
</dbReference>
<evidence type="ECO:0000250" key="1"/>
<evidence type="ECO:0000255" key="2">
    <source>
        <dbReference type="HAMAP-Rule" id="MF_00118"/>
    </source>
</evidence>
<evidence type="ECO:0000255" key="3">
    <source>
        <dbReference type="PROSITE-ProRule" id="PRU01059"/>
    </source>
</evidence>
<reference key="1">
    <citation type="journal article" date="1995" name="Mol. Phylogenet. Evol.">
        <title>Phylogenetic analysis of tufA sequences indicates a cyanobacterial origin of all plastids.</title>
        <authorList>
            <person name="Delwiche C.F."/>
            <person name="Kuhsel M."/>
            <person name="Palmer J.D."/>
        </authorList>
    </citation>
    <scope>NUCLEOTIDE SEQUENCE [GENOMIC DNA]</scope>
</reference>
<keyword id="KW-0963">Cytoplasm</keyword>
<keyword id="KW-0251">Elongation factor</keyword>
<keyword id="KW-0342">GTP-binding</keyword>
<keyword id="KW-0378">Hydrolase</keyword>
<keyword id="KW-0547">Nucleotide-binding</keyword>
<keyword id="KW-0648">Protein biosynthesis</keyword>
<sequence length="235" mass="25645">KNMITGAAQMDGGILVVSAADGPMPQTREHILLAKQVGVPSLVVFLNKEDQVDDAELLELVELEVRELLSIYDFPGDDIPIVIGSALKAVEALTATPTTKKGDNEWVDKILKLMDEVDEYIPTPEREIDKPFLMAVEDVFSITGRGTVATGRIERGKIKVGETVELVGIRNTRSTTVTGVEMFQKVLEEGMAGDNVGLLLRGIQKEDIERGMVIAKPGSITPHTQFEGEVYVLTK</sequence>
<accession>P50063</accession>
<gene>
    <name type="primary">tufA</name>
</gene>